<protein>
    <recommendedName>
        <fullName>Putative clathrin assembly protein At2g25430</fullName>
    </recommendedName>
</protein>
<dbReference type="EMBL" id="AC006300">
    <property type="protein sequence ID" value="AAD20703.1"/>
    <property type="molecule type" value="Genomic_DNA"/>
</dbReference>
<dbReference type="EMBL" id="CP002685">
    <property type="protein sequence ID" value="AEC07701.1"/>
    <property type="molecule type" value="Genomic_DNA"/>
</dbReference>
<dbReference type="EMBL" id="AY139760">
    <property type="protein sequence ID" value="AAM98081.1"/>
    <property type="molecule type" value="mRNA"/>
</dbReference>
<dbReference type="EMBL" id="BT008299">
    <property type="protein sequence ID" value="AAP37658.1"/>
    <property type="molecule type" value="mRNA"/>
</dbReference>
<dbReference type="EMBL" id="AY085092">
    <property type="protein sequence ID" value="AAM61646.1"/>
    <property type="molecule type" value="mRNA"/>
</dbReference>
<dbReference type="PIR" id="C84648">
    <property type="entry name" value="C84648"/>
</dbReference>
<dbReference type="RefSeq" id="NP_565595.1">
    <property type="nucleotide sequence ID" value="NM_128100.4"/>
</dbReference>
<dbReference type="SMR" id="Q8LF20"/>
<dbReference type="BioGRID" id="2433">
    <property type="interactions" value="3"/>
</dbReference>
<dbReference type="FunCoup" id="Q8LF20">
    <property type="interactions" value="3152"/>
</dbReference>
<dbReference type="STRING" id="3702.Q8LF20"/>
<dbReference type="iPTMnet" id="Q8LF20"/>
<dbReference type="PaxDb" id="3702-AT2G25430.1"/>
<dbReference type="ProteomicsDB" id="239180"/>
<dbReference type="EnsemblPlants" id="AT2G25430.1">
    <property type="protein sequence ID" value="AT2G25430.1"/>
    <property type="gene ID" value="AT2G25430"/>
</dbReference>
<dbReference type="GeneID" id="817081"/>
<dbReference type="Gramene" id="AT2G25430.1">
    <property type="protein sequence ID" value="AT2G25430.1"/>
    <property type="gene ID" value="AT2G25430"/>
</dbReference>
<dbReference type="KEGG" id="ath:AT2G25430"/>
<dbReference type="Araport" id="AT2G25430"/>
<dbReference type="TAIR" id="AT2G25430">
    <property type="gene designation" value="PICALM4A"/>
</dbReference>
<dbReference type="eggNOG" id="KOG0251">
    <property type="taxonomic scope" value="Eukaryota"/>
</dbReference>
<dbReference type="HOGENOM" id="CLU_014098_3_0_1"/>
<dbReference type="InParanoid" id="Q8LF20"/>
<dbReference type="OMA" id="FVRTFAM"/>
<dbReference type="PhylomeDB" id="Q8LF20"/>
<dbReference type="PRO" id="PR:Q8LF20"/>
<dbReference type="Proteomes" id="UP000006548">
    <property type="component" value="Chromosome 2"/>
</dbReference>
<dbReference type="ExpressionAtlas" id="Q8LF20">
    <property type="expression patterns" value="baseline and differential"/>
</dbReference>
<dbReference type="GO" id="GO:0005905">
    <property type="term" value="C:clathrin-coated pit"/>
    <property type="evidence" value="ECO:0007669"/>
    <property type="project" value="UniProtKB-SubCell"/>
</dbReference>
<dbReference type="GO" id="GO:0030136">
    <property type="term" value="C:clathrin-coated vesicle"/>
    <property type="evidence" value="ECO:0007669"/>
    <property type="project" value="UniProtKB-SubCell"/>
</dbReference>
<dbReference type="GO" id="GO:0005794">
    <property type="term" value="C:Golgi apparatus"/>
    <property type="evidence" value="ECO:0007669"/>
    <property type="project" value="UniProtKB-SubCell"/>
</dbReference>
<dbReference type="GO" id="GO:0005773">
    <property type="term" value="C:vacuole"/>
    <property type="evidence" value="ECO:0007005"/>
    <property type="project" value="TAIR"/>
</dbReference>
<dbReference type="GO" id="GO:0005545">
    <property type="term" value="F:1-phosphatidylinositol binding"/>
    <property type="evidence" value="ECO:0007669"/>
    <property type="project" value="InterPro"/>
</dbReference>
<dbReference type="GO" id="GO:0030276">
    <property type="term" value="F:clathrin binding"/>
    <property type="evidence" value="ECO:0007669"/>
    <property type="project" value="InterPro"/>
</dbReference>
<dbReference type="GO" id="GO:0048268">
    <property type="term" value="P:clathrin coat assembly"/>
    <property type="evidence" value="ECO:0007669"/>
    <property type="project" value="InterPro"/>
</dbReference>
<dbReference type="GO" id="GO:0072583">
    <property type="term" value="P:clathrin-dependent endocytosis"/>
    <property type="evidence" value="ECO:0007669"/>
    <property type="project" value="InterPro"/>
</dbReference>
<dbReference type="CDD" id="cd16987">
    <property type="entry name" value="ANTH_N_AP180_plant"/>
    <property type="match status" value="1"/>
</dbReference>
<dbReference type="FunFam" id="1.25.40.90:FF:000019">
    <property type="entry name" value="Clathrin coat assembly protein"/>
    <property type="match status" value="1"/>
</dbReference>
<dbReference type="FunFam" id="1.20.58.150:FF:000005">
    <property type="entry name" value="putative clathrin assembly protein At2g25430"/>
    <property type="match status" value="1"/>
</dbReference>
<dbReference type="Gene3D" id="1.25.40.90">
    <property type="match status" value="1"/>
</dbReference>
<dbReference type="Gene3D" id="1.20.58.150">
    <property type="entry name" value="ANTH domain"/>
    <property type="match status" value="1"/>
</dbReference>
<dbReference type="InterPro" id="IPR011417">
    <property type="entry name" value="ANTH_dom"/>
</dbReference>
<dbReference type="InterPro" id="IPR014712">
    <property type="entry name" value="ANTH_dom_sf"/>
</dbReference>
<dbReference type="InterPro" id="IPR048050">
    <property type="entry name" value="ANTH_N_plant"/>
</dbReference>
<dbReference type="InterPro" id="IPR045192">
    <property type="entry name" value="AP180-like"/>
</dbReference>
<dbReference type="InterPro" id="IPR013809">
    <property type="entry name" value="ENTH"/>
</dbReference>
<dbReference type="InterPro" id="IPR008942">
    <property type="entry name" value="ENTH_VHS"/>
</dbReference>
<dbReference type="PANTHER" id="PTHR22951:SF13">
    <property type="entry name" value="ASSEMBLY PROTEIN, PUTATIVE, EXPRESSED-RELATED"/>
    <property type="match status" value="1"/>
</dbReference>
<dbReference type="PANTHER" id="PTHR22951">
    <property type="entry name" value="CLATHRIN ASSEMBLY PROTEIN"/>
    <property type="match status" value="1"/>
</dbReference>
<dbReference type="Pfam" id="PF07651">
    <property type="entry name" value="ANTH"/>
    <property type="match status" value="2"/>
</dbReference>
<dbReference type="SMART" id="SM00273">
    <property type="entry name" value="ENTH"/>
    <property type="match status" value="1"/>
</dbReference>
<dbReference type="SUPFAM" id="SSF48464">
    <property type="entry name" value="ENTH/VHS domain"/>
    <property type="match status" value="1"/>
</dbReference>
<dbReference type="SUPFAM" id="SSF89009">
    <property type="entry name" value="GAT-like domain"/>
    <property type="match status" value="1"/>
</dbReference>
<dbReference type="PROSITE" id="PS50942">
    <property type="entry name" value="ENTH"/>
    <property type="match status" value="1"/>
</dbReference>
<comment type="subcellular location">
    <subcellularLocation>
        <location evidence="1">Membrane</location>
        <location evidence="1">Clathrin-coated pit</location>
    </subcellularLocation>
    <subcellularLocation>
        <location evidence="1">Golgi apparatus</location>
    </subcellularLocation>
    <subcellularLocation>
        <location evidence="1">Cytoplasmic vesicle</location>
        <location evidence="1">Clathrin-coated vesicle</location>
    </subcellularLocation>
    <text evidence="1">Colocalized with clathrin in the Golgi area.</text>
</comment>
<keyword id="KW-0168">Coated pit</keyword>
<keyword id="KW-0968">Cytoplasmic vesicle</keyword>
<keyword id="KW-0254">Endocytosis</keyword>
<keyword id="KW-0333">Golgi apparatus</keyword>
<keyword id="KW-0472">Membrane</keyword>
<keyword id="KW-0597">Phosphoprotein</keyword>
<keyword id="KW-1185">Reference proteome</keyword>
<evidence type="ECO:0000250" key="1"/>
<evidence type="ECO:0000250" key="2">
    <source>
        <dbReference type="UniProtKB" id="Q8S9J8"/>
    </source>
</evidence>
<evidence type="ECO:0000255" key="3">
    <source>
        <dbReference type="PROSITE-ProRule" id="PRU00243"/>
    </source>
</evidence>
<evidence type="ECO:0000256" key="4">
    <source>
        <dbReference type="SAM" id="MobiDB-lite"/>
    </source>
</evidence>
<evidence type="ECO:0000305" key="5"/>
<evidence type="ECO:0007744" key="6">
    <source>
    </source>
</evidence>
<proteinExistence type="evidence at protein level"/>
<organism>
    <name type="scientific">Arabidopsis thaliana</name>
    <name type="common">Mouse-ear cress</name>
    <dbReference type="NCBI Taxonomy" id="3702"/>
    <lineage>
        <taxon>Eukaryota</taxon>
        <taxon>Viridiplantae</taxon>
        <taxon>Streptophyta</taxon>
        <taxon>Embryophyta</taxon>
        <taxon>Tracheophyta</taxon>
        <taxon>Spermatophyta</taxon>
        <taxon>Magnoliopsida</taxon>
        <taxon>eudicotyledons</taxon>
        <taxon>Gunneridae</taxon>
        <taxon>Pentapetalae</taxon>
        <taxon>rosids</taxon>
        <taxon>malvids</taxon>
        <taxon>Brassicales</taxon>
        <taxon>Brassicaceae</taxon>
        <taxon>Camelineae</taxon>
        <taxon>Arabidopsis</taxon>
    </lineage>
</organism>
<name>CAP2_ARATH</name>
<accession>Q8LF20</accession>
<accession>Q9SKK6</accession>
<gene>
    <name type="ordered locus">At2g25430</name>
    <name type="ORF">F13B15.9</name>
</gene>
<sequence length="653" mass="72084">MAPSIRKAIGAVKDQTSIGIAKVASNMAPDLEVAIVKATSHDDDPASEKYIREILNLTSLSRGYILACVTSVSRRLSKTRDWVVALKALMLVHRLLNEGDPIFQEEILYSTRRGTRMLNMSDFRDEAHSSSWDHSAFVRTYAGYLDQRLELALFERKSGVSVNSGGNSSHHSNNDDRYGRGRDDFRSPPPRSYDYENGGGGGSDFRGDNNGYGGVPKRSRSYGDMTEMGGGGGGGGRDEKKVVTPLREMTPERIFGKMGHLQRLLDRFLSLRPTGLAKNSRMILIALYPVVRESFKLYADICEVLAVLLDKFFDMEYSDCVKAFDAYASAAKQIDELIAFYNWCKETGVARSSEYPEVQRITSKLLETLEEFVRDRAKRGKSPERKEIEAPPPVVEEEEPEPDMNEIKALPPPENYTPPPPPEPEPQPEKPQFTEDLVNLREDEVTADDQGNKFALALFAGPPGNNGKWEAFSSNGVTSAWQNPAAEPGKADWELALVETTSNLEKQTAALGGGFDNLLLNGMYDQGMVRQHVSTSQLTGGSASSVALPLPGKTNNQVLALPAPDGTVEKVNQDPFAASLTIPPPSYVQMAEMEKKQYLLSQEQQLWQQYQRDGMRGQASLAKMNTGPVPAYGMPPVNGMGPPPTGYYYNNPY</sequence>
<feature type="chain" id="PRO_0000187068" description="Putative clathrin assembly protein At2g25430">
    <location>
        <begin position="1"/>
        <end position="653"/>
    </location>
</feature>
<feature type="domain" description="ENTH" evidence="3">
    <location>
        <begin position="23"/>
        <end position="159"/>
    </location>
</feature>
<feature type="region of interest" description="Disordered" evidence="4">
    <location>
        <begin position="160"/>
        <end position="240"/>
    </location>
</feature>
<feature type="region of interest" description="Disordered" evidence="4">
    <location>
        <begin position="376"/>
        <end position="431"/>
    </location>
</feature>
<feature type="compositionally biased region" description="Low complexity" evidence="4">
    <location>
        <begin position="160"/>
        <end position="171"/>
    </location>
</feature>
<feature type="compositionally biased region" description="Basic and acidic residues" evidence="4">
    <location>
        <begin position="172"/>
        <end position="186"/>
    </location>
</feature>
<feature type="compositionally biased region" description="Gly residues" evidence="4">
    <location>
        <begin position="197"/>
        <end position="214"/>
    </location>
</feature>
<feature type="compositionally biased region" description="Basic and acidic residues" evidence="4">
    <location>
        <begin position="376"/>
        <end position="389"/>
    </location>
</feature>
<feature type="compositionally biased region" description="Acidic residues" evidence="4">
    <location>
        <begin position="395"/>
        <end position="404"/>
    </location>
</feature>
<feature type="compositionally biased region" description="Pro residues" evidence="4">
    <location>
        <begin position="410"/>
        <end position="425"/>
    </location>
</feature>
<feature type="modified residue" description="Phosphoserine" evidence="2">
    <location>
        <position position="221"/>
    </location>
</feature>
<feature type="modified residue" description="Phosphothreonine" evidence="6">
    <location>
        <position position="244"/>
    </location>
</feature>
<feature type="sequence conflict" description="In Ref. 4; AAM61646." evidence="5" ref="4">
    <location>
        <position position="203"/>
    </location>
</feature>
<feature type="sequence conflict" description="In Ref. 4; AAM61646." evidence="5" ref="4">
    <original>G</original>
    <variation>GG</variation>
    <location>
        <position position="236"/>
    </location>
</feature>
<feature type="sequence conflict" description="In Ref. 4; AAM61646." evidence="5" ref="4">
    <original>T</original>
    <variation>A</variation>
    <location>
        <position position="501"/>
    </location>
</feature>
<feature type="sequence conflict" description="In Ref. 4; AAM61646." evidence="5" ref="4">
    <original>A</original>
    <variation>T</variation>
    <location>
        <position position="631"/>
    </location>
</feature>
<reference key="1">
    <citation type="journal article" date="1999" name="Nature">
        <title>Sequence and analysis of chromosome 2 of the plant Arabidopsis thaliana.</title>
        <authorList>
            <person name="Lin X."/>
            <person name="Kaul S."/>
            <person name="Rounsley S.D."/>
            <person name="Shea T.P."/>
            <person name="Benito M.-I."/>
            <person name="Town C.D."/>
            <person name="Fujii C.Y."/>
            <person name="Mason T.M."/>
            <person name="Bowman C.L."/>
            <person name="Barnstead M.E."/>
            <person name="Feldblyum T.V."/>
            <person name="Buell C.R."/>
            <person name="Ketchum K.A."/>
            <person name="Lee J.J."/>
            <person name="Ronning C.M."/>
            <person name="Koo H.L."/>
            <person name="Moffat K.S."/>
            <person name="Cronin L.A."/>
            <person name="Shen M."/>
            <person name="Pai G."/>
            <person name="Van Aken S."/>
            <person name="Umayam L."/>
            <person name="Tallon L.J."/>
            <person name="Gill J.E."/>
            <person name="Adams M.D."/>
            <person name="Carrera A.J."/>
            <person name="Creasy T.H."/>
            <person name="Goodman H.M."/>
            <person name="Somerville C.R."/>
            <person name="Copenhaver G.P."/>
            <person name="Preuss D."/>
            <person name="Nierman W.C."/>
            <person name="White O."/>
            <person name="Eisen J.A."/>
            <person name="Salzberg S.L."/>
            <person name="Fraser C.M."/>
            <person name="Venter J.C."/>
        </authorList>
    </citation>
    <scope>NUCLEOTIDE SEQUENCE [LARGE SCALE GENOMIC DNA]</scope>
    <source>
        <strain>cv. Columbia</strain>
    </source>
</reference>
<reference key="2">
    <citation type="journal article" date="2017" name="Plant J.">
        <title>Araport11: a complete reannotation of the Arabidopsis thaliana reference genome.</title>
        <authorList>
            <person name="Cheng C.Y."/>
            <person name="Krishnakumar V."/>
            <person name="Chan A.P."/>
            <person name="Thibaud-Nissen F."/>
            <person name="Schobel S."/>
            <person name="Town C.D."/>
        </authorList>
    </citation>
    <scope>GENOME REANNOTATION</scope>
    <source>
        <strain>cv. Columbia</strain>
    </source>
</reference>
<reference key="3">
    <citation type="journal article" date="2003" name="Science">
        <title>Empirical analysis of transcriptional activity in the Arabidopsis genome.</title>
        <authorList>
            <person name="Yamada K."/>
            <person name="Lim J."/>
            <person name="Dale J.M."/>
            <person name="Chen H."/>
            <person name="Shinn P."/>
            <person name="Palm C.J."/>
            <person name="Southwick A.M."/>
            <person name="Wu H.C."/>
            <person name="Kim C.J."/>
            <person name="Nguyen M."/>
            <person name="Pham P.K."/>
            <person name="Cheuk R.F."/>
            <person name="Karlin-Newmann G."/>
            <person name="Liu S.X."/>
            <person name="Lam B."/>
            <person name="Sakano H."/>
            <person name="Wu T."/>
            <person name="Yu G."/>
            <person name="Miranda M."/>
            <person name="Quach H.L."/>
            <person name="Tripp M."/>
            <person name="Chang C.H."/>
            <person name="Lee J.M."/>
            <person name="Toriumi M.J."/>
            <person name="Chan M.M."/>
            <person name="Tang C.C."/>
            <person name="Onodera C.S."/>
            <person name="Deng J.M."/>
            <person name="Akiyama K."/>
            <person name="Ansari Y."/>
            <person name="Arakawa T."/>
            <person name="Banh J."/>
            <person name="Banno F."/>
            <person name="Bowser L."/>
            <person name="Brooks S.Y."/>
            <person name="Carninci P."/>
            <person name="Chao Q."/>
            <person name="Choy N."/>
            <person name="Enju A."/>
            <person name="Goldsmith A.D."/>
            <person name="Gurjal M."/>
            <person name="Hansen N.F."/>
            <person name="Hayashizaki Y."/>
            <person name="Johnson-Hopson C."/>
            <person name="Hsuan V.W."/>
            <person name="Iida K."/>
            <person name="Karnes M."/>
            <person name="Khan S."/>
            <person name="Koesema E."/>
            <person name="Ishida J."/>
            <person name="Jiang P.X."/>
            <person name="Jones T."/>
            <person name="Kawai J."/>
            <person name="Kamiya A."/>
            <person name="Meyers C."/>
            <person name="Nakajima M."/>
            <person name="Narusaka M."/>
            <person name="Seki M."/>
            <person name="Sakurai T."/>
            <person name="Satou M."/>
            <person name="Tamse R."/>
            <person name="Vaysberg M."/>
            <person name="Wallender E.K."/>
            <person name="Wong C."/>
            <person name="Yamamura Y."/>
            <person name="Yuan S."/>
            <person name="Shinozaki K."/>
            <person name="Davis R.W."/>
            <person name="Theologis A."/>
            <person name="Ecker J.R."/>
        </authorList>
    </citation>
    <scope>NUCLEOTIDE SEQUENCE [LARGE SCALE MRNA]</scope>
    <source>
        <strain>cv. Columbia</strain>
    </source>
</reference>
<reference key="4">
    <citation type="submission" date="2002-03" db="EMBL/GenBank/DDBJ databases">
        <title>Full-length cDNA from Arabidopsis thaliana.</title>
        <authorList>
            <person name="Brover V.V."/>
            <person name="Troukhan M.E."/>
            <person name="Alexandrov N.A."/>
            <person name="Lu Y.-P."/>
            <person name="Flavell R.B."/>
            <person name="Feldmann K.A."/>
        </authorList>
    </citation>
    <scope>NUCLEOTIDE SEQUENCE [LARGE SCALE MRNA]</scope>
</reference>
<reference key="5">
    <citation type="journal article" date="2008" name="J. Proteome Res.">
        <title>Site-specific phosphorylation profiling of Arabidopsis proteins by mass spectrometry and peptide chip analysis.</title>
        <authorList>
            <person name="de la Fuente van Bentem S."/>
            <person name="Anrather D."/>
            <person name="Dohnal I."/>
            <person name="Roitinger E."/>
            <person name="Csaszar E."/>
            <person name="Joore J."/>
            <person name="Buijnink J."/>
            <person name="Carreri A."/>
            <person name="Forzani C."/>
            <person name="Lorkovic Z.J."/>
            <person name="Barta A."/>
            <person name="Lecourieux D."/>
            <person name="Verhounig A."/>
            <person name="Jonak C."/>
            <person name="Hirt H."/>
        </authorList>
    </citation>
    <scope>IDENTIFICATION BY MASS SPECTROMETRY [LARGE SCALE ANALYSIS]</scope>
    <source>
        <tissue>Root</tissue>
    </source>
</reference>
<reference key="6">
    <citation type="journal article" date="2009" name="Plant Physiol.">
        <title>Large-scale Arabidopsis phosphoproteome profiling reveals novel chloroplast kinase substrates and phosphorylation networks.</title>
        <authorList>
            <person name="Reiland S."/>
            <person name="Messerli G."/>
            <person name="Baerenfaller K."/>
            <person name="Gerrits B."/>
            <person name="Endler A."/>
            <person name="Grossmann J."/>
            <person name="Gruissem W."/>
            <person name="Baginsky S."/>
        </authorList>
    </citation>
    <scope>PHOSPHORYLATION [LARGE SCALE ANALYSIS] AT THR-244</scope>
    <scope>IDENTIFICATION BY MASS SPECTROMETRY [LARGE SCALE ANALYSIS]</scope>
</reference>